<accession>B7NM67</accession>
<evidence type="ECO:0000255" key="1">
    <source>
        <dbReference type="HAMAP-Rule" id="MF_00210"/>
    </source>
</evidence>
<gene>
    <name evidence="1" type="primary">aroA</name>
    <name type="ordered locus">ECIAI39_2240</name>
</gene>
<proteinExistence type="inferred from homology"/>
<dbReference type="EC" id="2.5.1.19" evidence="1"/>
<dbReference type="EMBL" id="CU928164">
    <property type="protein sequence ID" value="CAR18367.1"/>
    <property type="molecule type" value="Genomic_DNA"/>
</dbReference>
<dbReference type="RefSeq" id="WP_000445250.1">
    <property type="nucleotide sequence ID" value="NC_011750.1"/>
</dbReference>
<dbReference type="RefSeq" id="YP_002408203.1">
    <property type="nucleotide sequence ID" value="NC_011750.1"/>
</dbReference>
<dbReference type="SMR" id="B7NM67"/>
<dbReference type="STRING" id="585057.ECIAI39_2240"/>
<dbReference type="KEGG" id="ect:ECIAI39_2240"/>
<dbReference type="PATRIC" id="fig|585057.6.peg.2333"/>
<dbReference type="HOGENOM" id="CLU_024321_0_0_6"/>
<dbReference type="UniPathway" id="UPA00053">
    <property type="reaction ID" value="UER00089"/>
</dbReference>
<dbReference type="Proteomes" id="UP000000749">
    <property type="component" value="Chromosome"/>
</dbReference>
<dbReference type="GO" id="GO:0005737">
    <property type="term" value="C:cytoplasm"/>
    <property type="evidence" value="ECO:0007669"/>
    <property type="project" value="UniProtKB-SubCell"/>
</dbReference>
<dbReference type="GO" id="GO:0003866">
    <property type="term" value="F:3-phosphoshikimate 1-carboxyvinyltransferase activity"/>
    <property type="evidence" value="ECO:0007669"/>
    <property type="project" value="UniProtKB-UniRule"/>
</dbReference>
<dbReference type="GO" id="GO:0008652">
    <property type="term" value="P:amino acid biosynthetic process"/>
    <property type="evidence" value="ECO:0007669"/>
    <property type="project" value="UniProtKB-KW"/>
</dbReference>
<dbReference type="GO" id="GO:0009073">
    <property type="term" value="P:aromatic amino acid family biosynthetic process"/>
    <property type="evidence" value="ECO:0007669"/>
    <property type="project" value="UniProtKB-KW"/>
</dbReference>
<dbReference type="GO" id="GO:0009423">
    <property type="term" value="P:chorismate biosynthetic process"/>
    <property type="evidence" value="ECO:0007669"/>
    <property type="project" value="UniProtKB-UniRule"/>
</dbReference>
<dbReference type="CDD" id="cd01554">
    <property type="entry name" value="EPT-like"/>
    <property type="match status" value="1"/>
</dbReference>
<dbReference type="FunFam" id="3.65.10.10:FF:000003">
    <property type="entry name" value="3-phosphoshikimate 1-carboxyvinyltransferase"/>
    <property type="match status" value="1"/>
</dbReference>
<dbReference type="FunFam" id="3.65.10.10:FF:000004">
    <property type="entry name" value="3-phosphoshikimate 1-carboxyvinyltransferase"/>
    <property type="match status" value="1"/>
</dbReference>
<dbReference type="Gene3D" id="3.65.10.10">
    <property type="entry name" value="Enolpyruvate transferase domain"/>
    <property type="match status" value="2"/>
</dbReference>
<dbReference type="HAMAP" id="MF_00210">
    <property type="entry name" value="EPSP_synth"/>
    <property type="match status" value="1"/>
</dbReference>
<dbReference type="InterPro" id="IPR001986">
    <property type="entry name" value="Enolpyruvate_Tfrase_dom"/>
</dbReference>
<dbReference type="InterPro" id="IPR036968">
    <property type="entry name" value="Enolpyruvate_Tfrase_sf"/>
</dbReference>
<dbReference type="InterPro" id="IPR006264">
    <property type="entry name" value="EPSP_synthase"/>
</dbReference>
<dbReference type="InterPro" id="IPR023193">
    <property type="entry name" value="EPSP_synthase_CS"/>
</dbReference>
<dbReference type="InterPro" id="IPR013792">
    <property type="entry name" value="RNA3'P_cycl/enolpyr_Trfase_a/b"/>
</dbReference>
<dbReference type="NCBIfam" id="TIGR01356">
    <property type="entry name" value="aroA"/>
    <property type="match status" value="1"/>
</dbReference>
<dbReference type="PANTHER" id="PTHR21090">
    <property type="entry name" value="AROM/DEHYDROQUINATE SYNTHASE"/>
    <property type="match status" value="1"/>
</dbReference>
<dbReference type="PANTHER" id="PTHR21090:SF5">
    <property type="entry name" value="PENTAFUNCTIONAL AROM POLYPEPTIDE"/>
    <property type="match status" value="1"/>
</dbReference>
<dbReference type="Pfam" id="PF00275">
    <property type="entry name" value="EPSP_synthase"/>
    <property type="match status" value="1"/>
</dbReference>
<dbReference type="PIRSF" id="PIRSF000505">
    <property type="entry name" value="EPSPS"/>
    <property type="match status" value="1"/>
</dbReference>
<dbReference type="SUPFAM" id="SSF55205">
    <property type="entry name" value="EPT/RTPC-like"/>
    <property type="match status" value="1"/>
</dbReference>
<dbReference type="PROSITE" id="PS00104">
    <property type="entry name" value="EPSP_SYNTHASE_1"/>
    <property type="match status" value="1"/>
</dbReference>
<dbReference type="PROSITE" id="PS00885">
    <property type="entry name" value="EPSP_SYNTHASE_2"/>
    <property type="match status" value="1"/>
</dbReference>
<reference key="1">
    <citation type="journal article" date="2009" name="PLoS Genet.">
        <title>Organised genome dynamics in the Escherichia coli species results in highly diverse adaptive paths.</title>
        <authorList>
            <person name="Touchon M."/>
            <person name="Hoede C."/>
            <person name="Tenaillon O."/>
            <person name="Barbe V."/>
            <person name="Baeriswyl S."/>
            <person name="Bidet P."/>
            <person name="Bingen E."/>
            <person name="Bonacorsi S."/>
            <person name="Bouchier C."/>
            <person name="Bouvet O."/>
            <person name="Calteau A."/>
            <person name="Chiapello H."/>
            <person name="Clermont O."/>
            <person name="Cruveiller S."/>
            <person name="Danchin A."/>
            <person name="Diard M."/>
            <person name="Dossat C."/>
            <person name="Karoui M.E."/>
            <person name="Frapy E."/>
            <person name="Garry L."/>
            <person name="Ghigo J.M."/>
            <person name="Gilles A.M."/>
            <person name="Johnson J."/>
            <person name="Le Bouguenec C."/>
            <person name="Lescat M."/>
            <person name="Mangenot S."/>
            <person name="Martinez-Jehanne V."/>
            <person name="Matic I."/>
            <person name="Nassif X."/>
            <person name="Oztas S."/>
            <person name="Petit M.A."/>
            <person name="Pichon C."/>
            <person name="Rouy Z."/>
            <person name="Ruf C.S."/>
            <person name="Schneider D."/>
            <person name="Tourret J."/>
            <person name="Vacherie B."/>
            <person name="Vallenet D."/>
            <person name="Medigue C."/>
            <person name="Rocha E.P.C."/>
            <person name="Denamur E."/>
        </authorList>
    </citation>
    <scope>NUCLEOTIDE SEQUENCE [LARGE SCALE GENOMIC DNA]</scope>
    <source>
        <strain>IAI39 / ExPEC</strain>
    </source>
</reference>
<sequence>MESLTLQPIARVDGTINLPGSKSVSNRALLLAALAHGKTVLTNLLDSDDVRYMLNALKALGVSYTLSADRTRCEIIGNGGPLHAKSALELFLGNAGTAMRPLAAALCLGSNDIVLTGEPRMKERPIGHLVDALRLGGAKITYLEQENYPPLRLQGGFTGGNVDVDGSVSSQFLTALLMTAPLAPEDTVIRIKGDLVSKPYIDITLNLMKTFGVEIENQHYQQFVVKGGQSYQSPGTYLVEGDASSASYFLAAAAIKGGTVKVTGIGRNSMQGDIRFADVLEKMGATICWGDDYISCTRGELNAIDMDMNHIPDAAMTIATAALFAKGNTTLRNIYNWRVKETDRLFAMATELRKVGAEVEEGHDFIRITPPEKLKFAEIATYNDHRMAMCFSLVALSDTAVTILDPKCTAKTFPDYFEQLARISQAA</sequence>
<comment type="function">
    <text evidence="1">Catalyzes the transfer of the enolpyruvyl moiety of phosphoenolpyruvate (PEP) to the 5-hydroxyl of shikimate-3-phosphate (S3P) to produce enolpyruvyl shikimate-3-phosphate and inorganic phosphate.</text>
</comment>
<comment type="catalytic activity">
    <reaction evidence="1">
        <text>3-phosphoshikimate + phosphoenolpyruvate = 5-O-(1-carboxyvinyl)-3-phosphoshikimate + phosphate</text>
        <dbReference type="Rhea" id="RHEA:21256"/>
        <dbReference type="ChEBI" id="CHEBI:43474"/>
        <dbReference type="ChEBI" id="CHEBI:57701"/>
        <dbReference type="ChEBI" id="CHEBI:58702"/>
        <dbReference type="ChEBI" id="CHEBI:145989"/>
        <dbReference type="EC" id="2.5.1.19"/>
    </reaction>
    <physiologicalReaction direction="left-to-right" evidence="1">
        <dbReference type="Rhea" id="RHEA:21257"/>
    </physiologicalReaction>
</comment>
<comment type="pathway">
    <text evidence="1">Metabolic intermediate biosynthesis; chorismate biosynthesis; chorismate from D-erythrose 4-phosphate and phosphoenolpyruvate: step 6/7.</text>
</comment>
<comment type="subunit">
    <text evidence="1">Monomer.</text>
</comment>
<comment type="subcellular location">
    <subcellularLocation>
        <location evidence="1">Cytoplasm</location>
    </subcellularLocation>
</comment>
<comment type="similarity">
    <text evidence="1">Belongs to the EPSP synthase family.</text>
</comment>
<name>AROA_ECO7I</name>
<keyword id="KW-0028">Amino-acid biosynthesis</keyword>
<keyword id="KW-0057">Aromatic amino acid biosynthesis</keyword>
<keyword id="KW-0963">Cytoplasm</keyword>
<keyword id="KW-0808">Transferase</keyword>
<organism>
    <name type="scientific">Escherichia coli O7:K1 (strain IAI39 / ExPEC)</name>
    <dbReference type="NCBI Taxonomy" id="585057"/>
    <lineage>
        <taxon>Bacteria</taxon>
        <taxon>Pseudomonadati</taxon>
        <taxon>Pseudomonadota</taxon>
        <taxon>Gammaproteobacteria</taxon>
        <taxon>Enterobacterales</taxon>
        <taxon>Enterobacteriaceae</taxon>
        <taxon>Escherichia</taxon>
    </lineage>
</organism>
<protein>
    <recommendedName>
        <fullName evidence="1">3-phosphoshikimate 1-carboxyvinyltransferase</fullName>
        <ecNumber evidence="1">2.5.1.19</ecNumber>
    </recommendedName>
    <alternativeName>
        <fullName evidence="1">5-enolpyruvylshikimate-3-phosphate synthase</fullName>
        <shortName evidence="1">EPSP synthase</shortName>
        <shortName evidence="1">EPSPS</shortName>
    </alternativeName>
</protein>
<feature type="chain" id="PRO_1000118782" description="3-phosphoshikimate 1-carboxyvinyltransferase">
    <location>
        <begin position="1"/>
        <end position="427"/>
    </location>
</feature>
<feature type="active site" description="Proton acceptor" evidence="1">
    <location>
        <position position="313"/>
    </location>
</feature>
<feature type="binding site" evidence="1">
    <location>
        <position position="22"/>
    </location>
    <ligand>
        <name>3-phosphoshikimate</name>
        <dbReference type="ChEBI" id="CHEBI:145989"/>
    </ligand>
</feature>
<feature type="binding site" evidence="1">
    <location>
        <position position="22"/>
    </location>
    <ligand>
        <name>phosphoenolpyruvate</name>
        <dbReference type="ChEBI" id="CHEBI:58702"/>
    </ligand>
</feature>
<feature type="binding site" evidence="1">
    <location>
        <position position="23"/>
    </location>
    <ligand>
        <name>3-phosphoshikimate</name>
        <dbReference type="ChEBI" id="CHEBI:145989"/>
    </ligand>
</feature>
<feature type="binding site" evidence="1">
    <location>
        <position position="27"/>
    </location>
    <ligand>
        <name>3-phosphoshikimate</name>
        <dbReference type="ChEBI" id="CHEBI:145989"/>
    </ligand>
</feature>
<feature type="binding site" evidence="1">
    <location>
        <position position="96"/>
    </location>
    <ligand>
        <name>phosphoenolpyruvate</name>
        <dbReference type="ChEBI" id="CHEBI:58702"/>
    </ligand>
</feature>
<feature type="binding site" evidence="1">
    <location>
        <position position="124"/>
    </location>
    <ligand>
        <name>phosphoenolpyruvate</name>
        <dbReference type="ChEBI" id="CHEBI:58702"/>
    </ligand>
</feature>
<feature type="binding site" evidence="1">
    <location>
        <position position="169"/>
    </location>
    <ligand>
        <name>3-phosphoshikimate</name>
        <dbReference type="ChEBI" id="CHEBI:145989"/>
    </ligand>
</feature>
<feature type="binding site" evidence="1">
    <location>
        <position position="170"/>
    </location>
    <ligand>
        <name>3-phosphoshikimate</name>
        <dbReference type="ChEBI" id="CHEBI:145989"/>
    </ligand>
</feature>
<feature type="binding site" evidence="1">
    <location>
        <position position="171"/>
    </location>
    <ligand>
        <name>3-phosphoshikimate</name>
        <dbReference type="ChEBI" id="CHEBI:145989"/>
    </ligand>
</feature>
<feature type="binding site" evidence="1">
    <location>
        <position position="171"/>
    </location>
    <ligand>
        <name>phosphoenolpyruvate</name>
        <dbReference type="ChEBI" id="CHEBI:58702"/>
    </ligand>
</feature>
<feature type="binding site" evidence="1">
    <location>
        <position position="197"/>
    </location>
    <ligand>
        <name>3-phosphoshikimate</name>
        <dbReference type="ChEBI" id="CHEBI:145989"/>
    </ligand>
</feature>
<feature type="binding site" evidence="1">
    <location>
        <position position="313"/>
    </location>
    <ligand>
        <name>3-phosphoshikimate</name>
        <dbReference type="ChEBI" id="CHEBI:145989"/>
    </ligand>
</feature>
<feature type="binding site" evidence="1">
    <location>
        <position position="336"/>
    </location>
    <ligand>
        <name>3-phosphoshikimate</name>
        <dbReference type="ChEBI" id="CHEBI:145989"/>
    </ligand>
</feature>
<feature type="binding site" evidence="1">
    <location>
        <position position="340"/>
    </location>
    <ligand>
        <name>3-phosphoshikimate</name>
        <dbReference type="ChEBI" id="CHEBI:145989"/>
    </ligand>
</feature>
<feature type="binding site" evidence="1">
    <location>
        <position position="344"/>
    </location>
    <ligand>
        <name>phosphoenolpyruvate</name>
        <dbReference type="ChEBI" id="CHEBI:58702"/>
    </ligand>
</feature>
<feature type="binding site" evidence="1">
    <location>
        <position position="386"/>
    </location>
    <ligand>
        <name>phosphoenolpyruvate</name>
        <dbReference type="ChEBI" id="CHEBI:58702"/>
    </ligand>
</feature>
<feature type="binding site" evidence="1">
    <location>
        <position position="411"/>
    </location>
    <ligand>
        <name>phosphoenolpyruvate</name>
        <dbReference type="ChEBI" id="CHEBI:58702"/>
    </ligand>
</feature>